<evidence type="ECO:0000255" key="1">
    <source>
        <dbReference type="HAMAP-Rule" id="MF_00360"/>
    </source>
</evidence>
<evidence type="ECO:0000256" key="2">
    <source>
        <dbReference type="SAM" id="MobiDB-lite"/>
    </source>
</evidence>
<evidence type="ECO:0000305" key="3"/>
<name>RS6_RALN1</name>
<dbReference type="EMBL" id="AL646052">
    <property type="protein sequence ID" value="CAD15009.1"/>
    <property type="molecule type" value="Genomic_DNA"/>
</dbReference>
<dbReference type="RefSeq" id="WP_011001256.1">
    <property type="nucleotide sequence ID" value="NC_003295.1"/>
</dbReference>
<dbReference type="SMR" id="Q8XZT8"/>
<dbReference type="STRING" id="267608.RSc1307"/>
<dbReference type="EnsemblBacteria" id="CAD15009">
    <property type="protein sequence ID" value="CAD15009"/>
    <property type="gene ID" value="RSc1307"/>
</dbReference>
<dbReference type="GeneID" id="93852430"/>
<dbReference type="KEGG" id="rso:RSc1307"/>
<dbReference type="eggNOG" id="COG0360">
    <property type="taxonomic scope" value="Bacteria"/>
</dbReference>
<dbReference type="HOGENOM" id="CLU_113441_6_1_4"/>
<dbReference type="Proteomes" id="UP000001436">
    <property type="component" value="Chromosome"/>
</dbReference>
<dbReference type="GO" id="GO:0022627">
    <property type="term" value="C:cytosolic small ribosomal subunit"/>
    <property type="evidence" value="ECO:0007669"/>
    <property type="project" value="TreeGrafter"/>
</dbReference>
<dbReference type="GO" id="GO:0070181">
    <property type="term" value="F:small ribosomal subunit rRNA binding"/>
    <property type="evidence" value="ECO:0007669"/>
    <property type="project" value="TreeGrafter"/>
</dbReference>
<dbReference type="GO" id="GO:0003735">
    <property type="term" value="F:structural constituent of ribosome"/>
    <property type="evidence" value="ECO:0007669"/>
    <property type="project" value="InterPro"/>
</dbReference>
<dbReference type="GO" id="GO:0006412">
    <property type="term" value="P:translation"/>
    <property type="evidence" value="ECO:0007669"/>
    <property type="project" value="UniProtKB-UniRule"/>
</dbReference>
<dbReference type="CDD" id="cd00473">
    <property type="entry name" value="bS6"/>
    <property type="match status" value="1"/>
</dbReference>
<dbReference type="Gene3D" id="3.30.70.60">
    <property type="match status" value="1"/>
</dbReference>
<dbReference type="HAMAP" id="MF_00360">
    <property type="entry name" value="Ribosomal_bS6"/>
    <property type="match status" value="1"/>
</dbReference>
<dbReference type="InterPro" id="IPR000529">
    <property type="entry name" value="Ribosomal_bS6"/>
</dbReference>
<dbReference type="InterPro" id="IPR035980">
    <property type="entry name" value="Ribosomal_bS6_sf"/>
</dbReference>
<dbReference type="InterPro" id="IPR020814">
    <property type="entry name" value="Ribosomal_S6_plastid/chlpt"/>
</dbReference>
<dbReference type="InterPro" id="IPR014717">
    <property type="entry name" value="Transl_elong_EF1B/ribsomal_bS6"/>
</dbReference>
<dbReference type="NCBIfam" id="TIGR00166">
    <property type="entry name" value="S6"/>
    <property type="match status" value="1"/>
</dbReference>
<dbReference type="PANTHER" id="PTHR21011">
    <property type="entry name" value="MITOCHONDRIAL 28S RIBOSOMAL PROTEIN S6"/>
    <property type="match status" value="1"/>
</dbReference>
<dbReference type="PANTHER" id="PTHR21011:SF1">
    <property type="entry name" value="SMALL RIBOSOMAL SUBUNIT PROTEIN BS6M"/>
    <property type="match status" value="1"/>
</dbReference>
<dbReference type="Pfam" id="PF01250">
    <property type="entry name" value="Ribosomal_S6"/>
    <property type="match status" value="1"/>
</dbReference>
<dbReference type="SUPFAM" id="SSF54995">
    <property type="entry name" value="Ribosomal protein S6"/>
    <property type="match status" value="1"/>
</dbReference>
<organism>
    <name type="scientific">Ralstonia nicotianae (strain ATCC BAA-1114 / GMI1000)</name>
    <name type="common">Ralstonia solanacearum</name>
    <dbReference type="NCBI Taxonomy" id="267608"/>
    <lineage>
        <taxon>Bacteria</taxon>
        <taxon>Pseudomonadati</taxon>
        <taxon>Pseudomonadota</taxon>
        <taxon>Betaproteobacteria</taxon>
        <taxon>Burkholderiales</taxon>
        <taxon>Burkholderiaceae</taxon>
        <taxon>Ralstonia</taxon>
        <taxon>Ralstonia solanacearum species complex</taxon>
    </lineage>
</organism>
<reference key="1">
    <citation type="journal article" date="2002" name="Nature">
        <title>Genome sequence of the plant pathogen Ralstonia solanacearum.</title>
        <authorList>
            <person name="Salanoubat M."/>
            <person name="Genin S."/>
            <person name="Artiguenave F."/>
            <person name="Gouzy J."/>
            <person name="Mangenot S."/>
            <person name="Arlat M."/>
            <person name="Billault A."/>
            <person name="Brottier P."/>
            <person name="Camus J.-C."/>
            <person name="Cattolico L."/>
            <person name="Chandler M."/>
            <person name="Choisne N."/>
            <person name="Claudel-Renard C."/>
            <person name="Cunnac S."/>
            <person name="Demange N."/>
            <person name="Gaspin C."/>
            <person name="Lavie M."/>
            <person name="Moisan A."/>
            <person name="Robert C."/>
            <person name="Saurin W."/>
            <person name="Schiex T."/>
            <person name="Siguier P."/>
            <person name="Thebault P."/>
            <person name="Whalen M."/>
            <person name="Wincker P."/>
            <person name="Levy M."/>
            <person name="Weissenbach J."/>
            <person name="Boucher C.A."/>
        </authorList>
    </citation>
    <scope>NUCLEOTIDE SEQUENCE [LARGE SCALE GENOMIC DNA]</scope>
    <source>
        <strain>ATCC BAA-1114 / GMI1000</strain>
    </source>
</reference>
<keyword id="KW-1185">Reference proteome</keyword>
<keyword id="KW-0687">Ribonucleoprotein</keyword>
<keyword id="KW-0689">Ribosomal protein</keyword>
<keyword id="KW-0694">RNA-binding</keyword>
<keyword id="KW-0699">rRNA-binding</keyword>
<comment type="function">
    <text evidence="1">Binds together with bS18 to 16S ribosomal RNA.</text>
</comment>
<comment type="similarity">
    <text evidence="1">Belongs to the bacterial ribosomal protein bS6 family.</text>
</comment>
<proteinExistence type="inferred from homology"/>
<feature type="chain" id="PRO_0000176822" description="Small ribosomal subunit protein bS6">
    <location>
        <begin position="1"/>
        <end position="122"/>
    </location>
</feature>
<feature type="region of interest" description="Disordered" evidence="2">
    <location>
        <begin position="95"/>
        <end position="122"/>
    </location>
</feature>
<accession>Q8XZT8</accession>
<sequence length="122" mass="13964">MRHYEIVFIVHPDQSEQVPAMIERYKSTVTSQGGQVHRVEDWGRRQLAYMIQKLAKAHYVCVNIECGKETLAELEHAFKFNDAVLRHLIVQTKKAETAPSPMMKEVQREEAKKAAAQSEQAA</sequence>
<gene>
    <name evidence="1" type="primary">rpsF</name>
    <name type="ordered locus">RSc1307</name>
    <name type="ORF">RS02829</name>
</gene>
<protein>
    <recommendedName>
        <fullName evidence="1">Small ribosomal subunit protein bS6</fullName>
    </recommendedName>
    <alternativeName>
        <fullName evidence="3">30S ribosomal protein S6</fullName>
    </alternativeName>
</protein>